<reference key="1">
    <citation type="journal article" date="2015" name="PLoS Genet.">
        <title>The dynamic genome and transcriptome of the human fungal pathogen Blastomyces and close relative Emmonsia.</title>
        <authorList>
            <person name="Munoz J.F."/>
            <person name="Gauthier G.M."/>
            <person name="Desjardins C.A."/>
            <person name="Gallo J.E."/>
            <person name="Holder J."/>
            <person name="Sullivan T.D."/>
            <person name="Marty A.J."/>
            <person name="Carmen J.C."/>
            <person name="Chen Z."/>
            <person name="Ding L."/>
            <person name="Gujja S."/>
            <person name="Magrini V."/>
            <person name="Misas E."/>
            <person name="Mitreva M."/>
            <person name="Priest M."/>
            <person name="Saif S."/>
            <person name="Whiston E.A."/>
            <person name="Young S."/>
            <person name="Zeng Q."/>
            <person name="Goldman W.E."/>
            <person name="Mardis E.R."/>
            <person name="Taylor J.W."/>
            <person name="McEwen J.G."/>
            <person name="Clay O.K."/>
            <person name="Klein B.S."/>
            <person name="Cuomo C.A."/>
        </authorList>
    </citation>
    <scope>NUCLEOTIDE SEQUENCE [LARGE SCALE GENOMIC DNA]</scope>
    <source>
        <strain>SLH14081</strain>
    </source>
</reference>
<feature type="chain" id="PRO_0000406427" description="Transcription activator of gluconeogenesis BDBG_05438">
    <location>
        <begin position="1"/>
        <end position="741"/>
    </location>
</feature>
<feature type="DNA-binding region" description="Zn(2)-C6 fungal-type" evidence="2">
    <location>
        <begin position="77"/>
        <end position="105"/>
    </location>
</feature>
<feature type="region of interest" description="Disordered" evidence="3">
    <location>
        <begin position="1"/>
        <end position="70"/>
    </location>
</feature>
<feature type="region of interest" description="Disordered" evidence="3">
    <location>
        <begin position="135"/>
        <end position="163"/>
    </location>
</feature>
<feature type="region of interest" description="Disordered" evidence="3">
    <location>
        <begin position="202"/>
        <end position="239"/>
    </location>
</feature>
<feature type="region of interest" description="Disordered" evidence="3">
    <location>
        <begin position="285"/>
        <end position="321"/>
    </location>
</feature>
<feature type="region of interest" description="Disordered" evidence="3">
    <location>
        <begin position="401"/>
        <end position="421"/>
    </location>
</feature>
<feature type="region of interest" description="Disordered" evidence="3">
    <location>
        <begin position="559"/>
        <end position="590"/>
    </location>
</feature>
<feature type="region of interest" description="Disordered" evidence="3">
    <location>
        <begin position="655"/>
        <end position="741"/>
    </location>
</feature>
<feature type="compositionally biased region" description="Polar residues" evidence="3">
    <location>
        <begin position="25"/>
        <end position="61"/>
    </location>
</feature>
<feature type="compositionally biased region" description="Polar residues" evidence="3">
    <location>
        <begin position="202"/>
        <end position="226"/>
    </location>
</feature>
<feature type="compositionally biased region" description="Low complexity" evidence="3">
    <location>
        <begin position="227"/>
        <end position="238"/>
    </location>
</feature>
<feature type="compositionally biased region" description="Polar residues" evidence="3">
    <location>
        <begin position="291"/>
        <end position="321"/>
    </location>
</feature>
<feature type="compositionally biased region" description="Polar residues" evidence="3">
    <location>
        <begin position="401"/>
        <end position="416"/>
    </location>
</feature>
<feature type="compositionally biased region" description="Low complexity" evidence="3">
    <location>
        <begin position="560"/>
        <end position="572"/>
    </location>
</feature>
<feature type="compositionally biased region" description="Polar residues" evidence="3">
    <location>
        <begin position="573"/>
        <end position="586"/>
    </location>
</feature>
<feature type="compositionally biased region" description="Low complexity" evidence="3">
    <location>
        <begin position="672"/>
        <end position="718"/>
    </location>
</feature>
<feature type="compositionally biased region" description="Basic residues" evidence="3">
    <location>
        <begin position="723"/>
        <end position="732"/>
    </location>
</feature>
<comment type="function">
    <text evidence="1">Transcription factor which regulates nonfermentable carbon utilization. Activator of gluconeogenetic genes (By similarity).</text>
</comment>
<comment type="subcellular location">
    <subcellularLocation>
        <location evidence="2">Nucleus</location>
    </subcellularLocation>
</comment>
<comment type="similarity">
    <text evidence="4">Belongs to the ERT1/acuK family.</text>
</comment>
<proteinExistence type="inferred from homology"/>
<organism>
    <name type="scientific">Blastomyces gilchristii (strain SLH14081)</name>
    <name type="common">Blastomyces dermatitidis</name>
    <dbReference type="NCBI Taxonomy" id="559298"/>
    <lineage>
        <taxon>Eukaryota</taxon>
        <taxon>Fungi</taxon>
        <taxon>Dikarya</taxon>
        <taxon>Ascomycota</taxon>
        <taxon>Pezizomycotina</taxon>
        <taxon>Eurotiomycetes</taxon>
        <taxon>Eurotiomycetidae</taxon>
        <taxon>Onygenales</taxon>
        <taxon>Ajellomycetaceae</taxon>
        <taxon>Blastomyces</taxon>
    </lineage>
</organism>
<keyword id="KW-0010">Activator</keyword>
<keyword id="KW-0238">DNA-binding</keyword>
<keyword id="KW-0312">Gluconeogenesis</keyword>
<keyword id="KW-0479">Metal-binding</keyword>
<keyword id="KW-0539">Nucleus</keyword>
<keyword id="KW-1185">Reference proteome</keyword>
<keyword id="KW-0804">Transcription</keyword>
<keyword id="KW-0805">Transcription regulation</keyword>
<keyword id="KW-0862">Zinc</keyword>
<name>ACUK_BLAGS</name>
<gene>
    <name type="ORF">BDBG_05438</name>
</gene>
<sequence length="741" mass="79017">MTASTRNGSPSPSPAAPTAAEQESKSMTTTPANPPETKSQTNGKGSGTAQSSQKPASTSANAKDPLRPRRKKAKRACFACQRAHLTCGDERPCQRCIKRGLQDACHDGVRKKAKYLHDAPNEALLPGIRGNYYNQANTTRNIPNQRGNASNSNSNKVSRQSVSSANFYTPQAARSYNVYVQAKSQQSHVRPAVMQDASMNPSVFHAQSPSSTQNFDLSSNPQTQNLSSAMSQTASSVSGQNQDPFGAAFFDPSHPALFNFDIASMNFGNRYGALEFGMLGHMATGAGDTPPSDSATQRGSIGRSSGTFTAQNFGDSANNQSPFLFGDPVLNDWNPTGQGQANPRNIYNQNAVAGQMGEQNPHAFAIESAPMNFASPSSTESPQMTTTTPFDEANANFSSRTNLMHPTNTPQQSRISTPGLKHQGLHVGVKRRYRSPSSIYESVKEPYSYTSGFHSLTAFIQRRFSPQKTLQIAKALASIRPSFIATTKTLNQDDLIFMEKCFQRTLWEYEDFINACGTPTIVCRRTGEIAAVGKEFSILTGWKKEVLLGKEPNLNVNTGSSLSSASSVRGSSTFTPRNNNTHNSIDPHTGMPTVGGGGASGRTQPVFLAELLDDDSVIEFYEDFAKLAFGDSRGSVMTTCKLLKYKTKEDSAALFHGKEETQQGGVDGSSGTGTTTSGDVATTTATGTSTSNGANANTNGNNTNPNDPSTAASSSASSGCRARSNHLGKRGGRGALPAKRG</sequence>
<protein>
    <recommendedName>
        <fullName>Transcription activator of gluconeogenesis BDBG_05438</fullName>
    </recommendedName>
</protein>
<accession>C5JT39</accession>
<accession>A0A179URQ2</accession>
<evidence type="ECO:0000250" key="1"/>
<evidence type="ECO:0000255" key="2">
    <source>
        <dbReference type="PROSITE-ProRule" id="PRU00227"/>
    </source>
</evidence>
<evidence type="ECO:0000256" key="3">
    <source>
        <dbReference type="SAM" id="MobiDB-lite"/>
    </source>
</evidence>
<evidence type="ECO:0000305" key="4"/>
<dbReference type="EMBL" id="GG657458">
    <property type="protein sequence ID" value="OAT09711.1"/>
    <property type="molecule type" value="Genomic_DNA"/>
</dbReference>
<dbReference type="RefSeq" id="XP_002623930.1">
    <property type="nucleotide sequence ID" value="XM_002623884.2"/>
</dbReference>
<dbReference type="SMR" id="C5JT39"/>
<dbReference type="GeneID" id="8503779"/>
<dbReference type="KEGG" id="bgh:BDBG_05438"/>
<dbReference type="VEuPathDB" id="FungiDB:BDBG_05438"/>
<dbReference type="HOGENOM" id="CLU_010748_1_0_1"/>
<dbReference type="OrthoDB" id="2538135at2759"/>
<dbReference type="Proteomes" id="UP000002038">
    <property type="component" value="Unassembled WGS sequence"/>
</dbReference>
<dbReference type="GO" id="GO:0005634">
    <property type="term" value="C:nucleus"/>
    <property type="evidence" value="ECO:0007669"/>
    <property type="project" value="UniProtKB-SubCell"/>
</dbReference>
<dbReference type="GO" id="GO:0000981">
    <property type="term" value="F:DNA-binding transcription factor activity, RNA polymerase II-specific"/>
    <property type="evidence" value="ECO:0007669"/>
    <property type="project" value="InterPro"/>
</dbReference>
<dbReference type="GO" id="GO:0000977">
    <property type="term" value="F:RNA polymerase II transcription regulatory region sequence-specific DNA binding"/>
    <property type="evidence" value="ECO:0007669"/>
    <property type="project" value="TreeGrafter"/>
</dbReference>
<dbReference type="GO" id="GO:0008270">
    <property type="term" value="F:zinc ion binding"/>
    <property type="evidence" value="ECO:0007669"/>
    <property type="project" value="InterPro"/>
</dbReference>
<dbReference type="GO" id="GO:0009267">
    <property type="term" value="P:cellular response to starvation"/>
    <property type="evidence" value="ECO:0007669"/>
    <property type="project" value="TreeGrafter"/>
</dbReference>
<dbReference type="GO" id="GO:0006094">
    <property type="term" value="P:gluconeogenesis"/>
    <property type="evidence" value="ECO:0007669"/>
    <property type="project" value="UniProtKB-KW"/>
</dbReference>
<dbReference type="CDD" id="cd00067">
    <property type="entry name" value="GAL4"/>
    <property type="match status" value="1"/>
</dbReference>
<dbReference type="Gene3D" id="4.10.240.10">
    <property type="entry name" value="Zn(2)-C6 fungal-type DNA-binding domain"/>
    <property type="match status" value="1"/>
</dbReference>
<dbReference type="InterPro" id="IPR050335">
    <property type="entry name" value="ERT1_acuK_gluconeogen_tf"/>
</dbReference>
<dbReference type="InterPro" id="IPR056751">
    <property type="entry name" value="PAS_13"/>
</dbReference>
<dbReference type="InterPro" id="IPR036864">
    <property type="entry name" value="Zn2-C6_fun-type_DNA-bd_sf"/>
</dbReference>
<dbReference type="InterPro" id="IPR001138">
    <property type="entry name" value="Zn2Cys6_DnaBD"/>
</dbReference>
<dbReference type="PANTHER" id="PTHR47659:SF1">
    <property type="entry name" value="TRANSCRIPTION ACTIVATOR OF GLUCONEOGENESIS ERT1"/>
    <property type="match status" value="1"/>
</dbReference>
<dbReference type="PANTHER" id="PTHR47659">
    <property type="entry name" value="ZN(II)2CYS6 TRANSCRIPTION FACTOR (EUROFUNG)-RELATED"/>
    <property type="match status" value="1"/>
</dbReference>
<dbReference type="Pfam" id="PF24990">
    <property type="entry name" value="PAS_13"/>
    <property type="match status" value="1"/>
</dbReference>
<dbReference type="SMART" id="SM00066">
    <property type="entry name" value="GAL4"/>
    <property type="match status" value="1"/>
</dbReference>
<dbReference type="SUPFAM" id="SSF57701">
    <property type="entry name" value="Zn2/Cys6 DNA-binding domain"/>
    <property type="match status" value="1"/>
</dbReference>
<dbReference type="PROSITE" id="PS50048">
    <property type="entry name" value="ZN2_CY6_FUNGAL_2"/>
    <property type="match status" value="1"/>
</dbReference>